<name>CSN2_NEUCR</name>
<accession>Q7SI58</accession>
<protein>
    <recommendedName>
        <fullName>COP9 signalosome complex subunit 2</fullName>
        <shortName>Signalosome subunit 2</shortName>
    </recommendedName>
</protein>
<feature type="chain" id="PRO_0000314741" description="COP9 signalosome complex subunit 2">
    <location>
        <begin position="1"/>
        <end position="490"/>
    </location>
</feature>
<feature type="domain" description="PCI" evidence="2">
    <location>
        <begin position="250"/>
        <end position="418"/>
    </location>
</feature>
<feature type="region of interest" description="Disordered" evidence="3">
    <location>
        <begin position="1"/>
        <end position="32"/>
    </location>
</feature>
<feature type="region of interest" description="Disordered" evidence="3">
    <location>
        <begin position="469"/>
        <end position="490"/>
    </location>
</feature>
<feature type="compositionally biased region" description="Acidic residues" evidence="3">
    <location>
        <begin position="1"/>
        <end position="30"/>
    </location>
</feature>
<reference key="1">
    <citation type="journal article" date="2005" name="Genes Dev.">
        <title>The COP9 signalosome regulates the Neurospora circadian clock by controlling the stability of the SCFFWD-1 complex.</title>
        <authorList>
            <person name="He Q."/>
            <person name="Cheng P."/>
            <person name="He Q."/>
            <person name="Liu Y."/>
        </authorList>
    </citation>
    <scope>NUCLEOTIDE SEQUENCE [MRNA]</scope>
    <scope>IDENTIFICATION BY MASS SPECTROMETRY</scope>
    <scope>IDENTIFICATION IN THE COP9 SIGNALOSOME COMPLEX</scope>
    <scope>FUNCTION OF THE COP9 SIGNALOSOME COMPLEX</scope>
</reference>
<reference key="2">
    <citation type="journal article" date="2003" name="Nature">
        <title>The genome sequence of the filamentous fungus Neurospora crassa.</title>
        <authorList>
            <person name="Galagan J.E."/>
            <person name="Calvo S.E."/>
            <person name="Borkovich K.A."/>
            <person name="Selker E.U."/>
            <person name="Read N.D."/>
            <person name="Jaffe D.B."/>
            <person name="FitzHugh W."/>
            <person name="Ma L.-J."/>
            <person name="Smirnov S."/>
            <person name="Purcell S."/>
            <person name="Rehman B."/>
            <person name="Elkins T."/>
            <person name="Engels R."/>
            <person name="Wang S."/>
            <person name="Nielsen C.B."/>
            <person name="Butler J."/>
            <person name="Endrizzi M."/>
            <person name="Qui D."/>
            <person name="Ianakiev P."/>
            <person name="Bell-Pedersen D."/>
            <person name="Nelson M.A."/>
            <person name="Werner-Washburne M."/>
            <person name="Selitrennikoff C.P."/>
            <person name="Kinsey J.A."/>
            <person name="Braun E.L."/>
            <person name="Zelter A."/>
            <person name="Schulte U."/>
            <person name="Kothe G.O."/>
            <person name="Jedd G."/>
            <person name="Mewes H.-W."/>
            <person name="Staben C."/>
            <person name="Marcotte E."/>
            <person name="Greenberg D."/>
            <person name="Roy A."/>
            <person name="Foley K."/>
            <person name="Naylor J."/>
            <person name="Stange-Thomann N."/>
            <person name="Barrett R."/>
            <person name="Gnerre S."/>
            <person name="Kamal M."/>
            <person name="Kamvysselis M."/>
            <person name="Mauceli E.W."/>
            <person name="Bielke C."/>
            <person name="Rudd S."/>
            <person name="Frishman D."/>
            <person name="Krystofova S."/>
            <person name="Rasmussen C."/>
            <person name="Metzenberg R.L."/>
            <person name="Perkins D.D."/>
            <person name="Kroken S."/>
            <person name="Cogoni C."/>
            <person name="Macino G."/>
            <person name="Catcheside D.E.A."/>
            <person name="Li W."/>
            <person name="Pratt R.J."/>
            <person name="Osmani S.A."/>
            <person name="DeSouza C.P.C."/>
            <person name="Glass N.L."/>
            <person name="Orbach M.J."/>
            <person name="Berglund J.A."/>
            <person name="Voelker R."/>
            <person name="Yarden O."/>
            <person name="Plamann M."/>
            <person name="Seiler S."/>
            <person name="Dunlap J.C."/>
            <person name="Radford A."/>
            <person name="Aramayo R."/>
            <person name="Natvig D.O."/>
            <person name="Alex L.A."/>
            <person name="Mannhaupt G."/>
            <person name="Ebbole D.J."/>
            <person name="Freitag M."/>
            <person name="Paulsen I."/>
            <person name="Sachs M.S."/>
            <person name="Lander E.S."/>
            <person name="Nusbaum C."/>
            <person name="Birren B.W."/>
        </authorList>
    </citation>
    <scope>NUCLEOTIDE SEQUENCE [LARGE SCALE GENOMIC DNA]</scope>
    <source>
        <strain>ATCC 24698 / 74-OR23-1A / CBS 708.71 / DSM 1257 / FGSC 987</strain>
    </source>
</reference>
<reference key="3">
    <citation type="journal article" date="2003" name="Nucleic Acids Res.">
        <title>What's in the genome of a filamentous fungus? Analysis of the Neurospora genome sequence.</title>
        <authorList>
            <person name="Mannhaupt G."/>
            <person name="Montrone C."/>
            <person name="Haase D."/>
            <person name="Mewes H.-W."/>
            <person name="Aign V."/>
            <person name="Hoheisel J.D."/>
            <person name="Fartmann B."/>
            <person name="Nyakatura G."/>
            <person name="Kempken F."/>
            <person name="Maier J."/>
            <person name="Schulte U."/>
        </authorList>
    </citation>
    <scope>NUCLEOTIDE SEQUENCE [LARGE SCALE GENOMIC DNA]</scope>
    <source>
        <strain>ATCC 24698 / 74-OR23-1A / CBS 708.71 / DSM 1257 / FGSC 987</strain>
    </source>
</reference>
<sequence>MSDDDFMQDSDQEYDFEYEDDEEEDTGDVDIENKYYNAKQTKTSDPEEALQEFLSIPPLEQEKGDWGFKALKQAIKLEFKLKRYQEATEHYEELLTYVKSAVTRNYSEKSIDNMLNYIEKGYDDPKAVQCIEKFYSLTLQCFQSTNNERLWLKTNIKLARLLLDRKDYHAVARKLRELHNACRKSDGTDDPSKGTYSLEIYALEIQMYSETRNNNQLKVLYQKALKVRSAVPHPKIQGVIRECGGKMHMSEENWKEAQSDFFEAFRNYDEAGDLRRIQVLKYLLLTTMLMKSDINPFDSQEMKPYRNDPRIFAMTELVDAYQRDDIYRYEDVLQKNTDLLADPFIAENIDEVTRNMRTKGVVKLIAPYTRMRISWLAERLRITEPEVMDILSFLIVDGRVKGRIDEHKGVLELESREDADHVQAITVLSEAVGNLFNAVFKSTDGFQPGQGDFMNSMADQSADIGSLDDTMRSMGSGKRGRRVGLTQRAY</sequence>
<dbReference type="EMBL" id="DQ242511">
    <property type="protein sequence ID" value="ABB36581.1"/>
    <property type="molecule type" value="mRNA"/>
</dbReference>
<dbReference type="EMBL" id="CM002236">
    <property type="protein sequence ID" value="EAA36497.1"/>
    <property type="molecule type" value="Genomic_DNA"/>
</dbReference>
<dbReference type="EMBL" id="BX842641">
    <property type="protein sequence ID" value="CAE76602.1"/>
    <property type="molecule type" value="Genomic_DNA"/>
</dbReference>
<dbReference type="RefSeq" id="XP_965733.1">
    <property type="nucleotide sequence ID" value="XM_960640.2"/>
</dbReference>
<dbReference type="SMR" id="Q7SI58"/>
<dbReference type="STRING" id="367110.Q7SI58"/>
<dbReference type="PaxDb" id="5141-EFNCRP00000000985"/>
<dbReference type="EnsemblFungi" id="EAA36497">
    <property type="protein sequence ID" value="EAA36497"/>
    <property type="gene ID" value="NCU00593"/>
</dbReference>
<dbReference type="GeneID" id="3881875"/>
<dbReference type="KEGG" id="ncr:NCU00593"/>
<dbReference type="VEuPathDB" id="FungiDB:NCU00593"/>
<dbReference type="HOGENOM" id="CLU_028981_0_1_1"/>
<dbReference type="InParanoid" id="Q7SI58"/>
<dbReference type="OrthoDB" id="194139at2759"/>
<dbReference type="Proteomes" id="UP000001805">
    <property type="component" value="Chromosome 1, Linkage Group I"/>
</dbReference>
<dbReference type="GO" id="GO:0008180">
    <property type="term" value="C:COP9 signalosome"/>
    <property type="evidence" value="ECO:0000318"/>
    <property type="project" value="GO_Central"/>
</dbReference>
<dbReference type="GO" id="GO:0005737">
    <property type="term" value="C:cytoplasm"/>
    <property type="evidence" value="ECO:0007669"/>
    <property type="project" value="UniProtKB-SubCell"/>
</dbReference>
<dbReference type="GO" id="GO:0000338">
    <property type="term" value="P:protein deneddylation"/>
    <property type="evidence" value="ECO:0000318"/>
    <property type="project" value="GO_Central"/>
</dbReference>
<dbReference type="FunFam" id="1.25.40.570:FF:000006">
    <property type="entry name" value="COP9 signalosome complex subunit 2"/>
    <property type="match status" value="1"/>
</dbReference>
<dbReference type="Gene3D" id="1.25.40.570">
    <property type="match status" value="1"/>
</dbReference>
<dbReference type="InterPro" id="IPR050871">
    <property type="entry name" value="26S_Proteasome/COP9_Components"/>
</dbReference>
<dbReference type="InterPro" id="IPR000717">
    <property type="entry name" value="PCI_dom"/>
</dbReference>
<dbReference type="InterPro" id="IPR036390">
    <property type="entry name" value="WH_DNA-bd_sf"/>
</dbReference>
<dbReference type="PANTHER" id="PTHR10678">
    <property type="entry name" value="26S PROTEASOME NON-ATPASE REGULATORY SUBUNIT 11/COP9 SIGNALOSOME COMPLEX SUBUNIT 2"/>
    <property type="match status" value="1"/>
</dbReference>
<dbReference type="Pfam" id="PF01399">
    <property type="entry name" value="PCI"/>
    <property type="match status" value="1"/>
</dbReference>
<dbReference type="SMART" id="SM00753">
    <property type="entry name" value="PAM"/>
    <property type="match status" value="1"/>
</dbReference>
<dbReference type="SMART" id="SM00088">
    <property type="entry name" value="PINT"/>
    <property type="match status" value="1"/>
</dbReference>
<dbReference type="SUPFAM" id="SSF46785">
    <property type="entry name" value="Winged helix' DNA-binding domain"/>
    <property type="match status" value="1"/>
</dbReference>
<dbReference type="PROSITE" id="PS50250">
    <property type="entry name" value="PCI"/>
    <property type="match status" value="1"/>
</dbReference>
<evidence type="ECO:0000250" key="1"/>
<evidence type="ECO:0000255" key="2">
    <source>
        <dbReference type="PROSITE-ProRule" id="PRU01185"/>
    </source>
</evidence>
<evidence type="ECO:0000256" key="3">
    <source>
        <dbReference type="SAM" id="MobiDB-lite"/>
    </source>
</evidence>
<evidence type="ECO:0000269" key="4">
    <source>
    </source>
</evidence>
<evidence type="ECO:0000305" key="5"/>
<gene>
    <name type="primary">csn-2</name>
    <name type="ORF">B22I21.160</name>
    <name type="ORF">NCU00593</name>
</gene>
<keyword id="KW-0963">Cytoplasm</keyword>
<keyword id="KW-0539">Nucleus</keyword>
<keyword id="KW-1185">Reference proteome</keyword>
<keyword id="KW-0736">Signalosome</keyword>
<organism>
    <name type="scientific">Neurospora crassa (strain ATCC 24698 / 74-OR23-1A / CBS 708.71 / DSM 1257 / FGSC 987)</name>
    <dbReference type="NCBI Taxonomy" id="367110"/>
    <lineage>
        <taxon>Eukaryota</taxon>
        <taxon>Fungi</taxon>
        <taxon>Dikarya</taxon>
        <taxon>Ascomycota</taxon>
        <taxon>Pezizomycotina</taxon>
        <taxon>Sordariomycetes</taxon>
        <taxon>Sordariomycetidae</taxon>
        <taxon>Sordariales</taxon>
        <taxon>Sordariaceae</taxon>
        <taxon>Neurospora</taxon>
    </lineage>
</organism>
<proteinExistence type="evidence at protein level"/>
<comment type="function">
    <text evidence="1 4">Component of the COP9 signalosome (CSN) complex that acts as an regulator of the ubiquitin (Ubl) conjugation pathway by mediating the deneddylation of the cullin subunit of SCF-type E3 ubiquitin-protein ligase complexes (By similarity). The CSN complex is involved in the regulation of the circadian clock through its control of the stability of the SCF(FWD-1) complex.</text>
</comment>
<comment type="subunit">
    <text evidence="4">Component of the COP9 signalosome (CSN) complex.</text>
</comment>
<comment type="subcellular location">
    <subcellularLocation>
        <location evidence="1">Cytoplasm</location>
    </subcellularLocation>
    <subcellularLocation>
        <location evidence="1">Nucleus</location>
    </subcellularLocation>
</comment>
<comment type="similarity">
    <text evidence="5">Belongs to the CSN2 family.</text>
</comment>